<protein>
    <recommendedName>
        <fullName evidence="8">Centriolar and ciliogenesis-associated protein HYLS1</fullName>
    </recommendedName>
    <alternativeName>
        <fullName>Hydrolethalus syndrome protein 1</fullName>
    </alternativeName>
</protein>
<organism>
    <name type="scientific">Homo sapiens</name>
    <name type="common">Human</name>
    <dbReference type="NCBI Taxonomy" id="9606"/>
    <lineage>
        <taxon>Eukaryota</taxon>
        <taxon>Metazoa</taxon>
        <taxon>Chordata</taxon>
        <taxon>Craniata</taxon>
        <taxon>Vertebrata</taxon>
        <taxon>Euteleostomi</taxon>
        <taxon>Mammalia</taxon>
        <taxon>Eutheria</taxon>
        <taxon>Euarchontoglires</taxon>
        <taxon>Primates</taxon>
        <taxon>Haplorrhini</taxon>
        <taxon>Catarrhini</taxon>
        <taxon>Hominidae</taxon>
        <taxon>Homo</taxon>
    </lineage>
</organism>
<dbReference type="EMBL" id="AK057477">
    <property type="protein sequence ID" value="BAB71503.1"/>
    <property type="molecule type" value="mRNA"/>
</dbReference>
<dbReference type="EMBL" id="AK127394">
    <property type="protein sequence ID" value="BAG54500.1"/>
    <property type="molecule type" value="mRNA"/>
</dbReference>
<dbReference type="EMBL" id="AP000842">
    <property type="status" value="NOT_ANNOTATED_CDS"/>
    <property type="molecule type" value="Genomic_DNA"/>
</dbReference>
<dbReference type="EMBL" id="BC015047">
    <property type="protein sequence ID" value="AAH15047.1"/>
    <property type="status" value="ALT_INIT"/>
    <property type="molecule type" value="mRNA"/>
</dbReference>
<dbReference type="CCDS" id="CCDS8467.1"/>
<dbReference type="RefSeq" id="NP_001128265.1">
    <property type="nucleotide sequence ID" value="NM_001134793.2"/>
</dbReference>
<dbReference type="RefSeq" id="NP_001364198.1">
    <property type="nucleotide sequence ID" value="NM_001377269.1"/>
</dbReference>
<dbReference type="RefSeq" id="NP_001364199.1">
    <property type="nucleotide sequence ID" value="NM_001377270.1"/>
</dbReference>
<dbReference type="RefSeq" id="NP_001411293.1">
    <property type="nucleotide sequence ID" value="NM_001424364.1"/>
</dbReference>
<dbReference type="RefSeq" id="NP_001411295.1">
    <property type="nucleotide sequence ID" value="NM_001424366.1"/>
</dbReference>
<dbReference type="RefSeq" id="NP_001411296.1">
    <property type="nucleotide sequence ID" value="NM_001424367.1"/>
</dbReference>
<dbReference type="RefSeq" id="NP_001411297.1">
    <property type="nucleotide sequence ID" value="NM_001424368.1"/>
</dbReference>
<dbReference type="RefSeq" id="NP_001411298.1">
    <property type="nucleotide sequence ID" value="NM_001424369.1"/>
</dbReference>
<dbReference type="RefSeq" id="NP_001411299.1">
    <property type="nucleotide sequence ID" value="NM_001424370.1"/>
</dbReference>
<dbReference type="RefSeq" id="NP_001411300.1">
    <property type="nucleotide sequence ID" value="NM_001424371.1"/>
</dbReference>
<dbReference type="RefSeq" id="NP_659451.1">
    <property type="nucleotide sequence ID" value="NM_145014.3"/>
</dbReference>
<dbReference type="RefSeq" id="XP_005271487.1">
    <property type="nucleotide sequence ID" value="XM_005271430.2"/>
</dbReference>
<dbReference type="RefSeq" id="XP_006718840.1">
    <property type="nucleotide sequence ID" value="XM_006718777.3"/>
</dbReference>
<dbReference type="RefSeq" id="XP_011540961.1">
    <property type="nucleotide sequence ID" value="XM_011542659.2"/>
</dbReference>
<dbReference type="RefSeq" id="XP_016872809.1">
    <property type="nucleotide sequence ID" value="XM_017017320.1"/>
</dbReference>
<dbReference type="RefSeq" id="XP_016872810.1">
    <property type="nucleotide sequence ID" value="XM_017017321.1"/>
</dbReference>
<dbReference type="SMR" id="Q96M11"/>
<dbReference type="BioGRID" id="128581">
    <property type="interactions" value="7"/>
</dbReference>
<dbReference type="FunCoup" id="Q96M11">
    <property type="interactions" value="347"/>
</dbReference>
<dbReference type="IntAct" id="Q96M11">
    <property type="interactions" value="7"/>
</dbReference>
<dbReference type="MINT" id="Q96M11"/>
<dbReference type="STRING" id="9606.ENSP00000414884"/>
<dbReference type="iPTMnet" id="Q96M11"/>
<dbReference type="PhosphoSitePlus" id="Q96M11"/>
<dbReference type="BioMuta" id="HYLS1"/>
<dbReference type="DMDM" id="74732277"/>
<dbReference type="jPOST" id="Q96M11"/>
<dbReference type="MassIVE" id="Q96M11"/>
<dbReference type="PaxDb" id="9606-ENSP00000414884"/>
<dbReference type="PeptideAtlas" id="Q96M11"/>
<dbReference type="ProteomicsDB" id="77278"/>
<dbReference type="Antibodypedia" id="32968">
    <property type="antibodies" value="65 antibodies from 18 providers"/>
</dbReference>
<dbReference type="DNASU" id="219844"/>
<dbReference type="Ensembl" id="ENST00000356438.7">
    <property type="protein sequence ID" value="ENSP00000348815.3"/>
    <property type="gene ID" value="ENSG00000198331.11"/>
</dbReference>
<dbReference type="Ensembl" id="ENST00000425380.7">
    <property type="protein sequence ID" value="ENSP00000414884.2"/>
    <property type="gene ID" value="ENSG00000198331.11"/>
</dbReference>
<dbReference type="Ensembl" id="ENST00000526028.1">
    <property type="protein sequence ID" value="ENSP00000436833.1"/>
    <property type="gene ID" value="ENSG00000198331.11"/>
</dbReference>
<dbReference type="GeneID" id="219844"/>
<dbReference type="KEGG" id="hsa:219844"/>
<dbReference type="MANE-Select" id="ENST00000425380.7">
    <property type="protein sequence ID" value="ENSP00000414884.2"/>
    <property type="RefSeq nucleotide sequence ID" value="NM_001134793.2"/>
    <property type="RefSeq protein sequence ID" value="NP_001128265.1"/>
</dbReference>
<dbReference type="UCSC" id="uc001qcx.5">
    <property type="organism name" value="human"/>
</dbReference>
<dbReference type="AGR" id="HGNC:26558"/>
<dbReference type="CTD" id="219844"/>
<dbReference type="DisGeNET" id="219844"/>
<dbReference type="GeneCards" id="HYLS1"/>
<dbReference type="HGNC" id="HGNC:26558">
    <property type="gene designation" value="HYLS1"/>
</dbReference>
<dbReference type="HPA" id="ENSG00000198331">
    <property type="expression patterns" value="Tissue enhanced (testis)"/>
</dbReference>
<dbReference type="MalaCards" id="HYLS1"/>
<dbReference type="MIM" id="236680">
    <property type="type" value="phenotype"/>
</dbReference>
<dbReference type="MIM" id="610693">
    <property type="type" value="gene"/>
</dbReference>
<dbReference type="neXtProt" id="NX_Q96M11"/>
<dbReference type="OpenTargets" id="ENSG00000198331"/>
<dbReference type="Orphanet" id="2189">
    <property type="disease" value="Hydrolethalus"/>
</dbReference>
<dbReference type="Orphanet" id="475">
    <property type="disease" value="Joubert syndrome"/>
</dbReference>
<dbReference type="PharmGKB" id="PA142671669"/>
<dbReference type="VEuPathDB" id="HostDB:ENSG00000198331"/>
<dbReference type="eggNOG" id="ENOG502QVD7">
    <property type="taxonomic scope" value="Eukaryota"/>
</dbReference>
<dbReference type="GeneTree" id="ENSGT00390000008848"/>
<dbReference type="HOGENOM" id="CLU_079788_0_0_1"/>
<dbReference type="InParanoid" id="Q96M11"/>
<dbReference type="OMA" id="ICYLQRE"/>
<dbReference type="OrthoDB" id="6343432at2759"/>
<dbReference type="PAN-GO" id="Q96M11">
    <property type="GO annotations" value="3 GO annotations based on evolutionary models"/>
</dbReference>
<dbReference type="PhylomeDB" id="Q96M11"/>
<dbReference type="TreeFam" id="TF336132"/>
<dbReference type="PathwayCommons" id="Q96M11"/>
<dbReference type="SignaLink" id="Q96M11"/>
<dbReference type="BioGRID-ORCS" id="219844">
    <property type="hits" value="29 hits in 1160 CRISPR screens"/>
</dbReference>
<dbReference type="ChiTaRS" id="HYLS1">
    <property type="organism name" value="human"/>
</dbReference>
<dbReference type="GeneWiki" id="HYLS1"/>
<dbReference type="GenomeRNAi" id="219844"/>
<dbReference type="Pharos" id="Q96M11">
    <property type="development level" value="Tbio"/>
</dbReference>
<dbReference type="PRO" id="PR:Q96M11"/>
<dbReference type="Proteomes" id="UP000005640">
    <property type="component" value="Chromosome 11"/>
</dbReference>
<dbReference type="RNAct" id="Q96M11">
    <property type="molecule type" value="protein"/>
</dbReference>
<dbReference type="Bgee" id="ENSG00000198331">
    <property type="expression patterns" value="Expressed in oocyte and 139 other cell types or tissues"/>
</dbReference>
<dbReference type="ExpressionAtlas" id="Q96M11">
    <property type="expression patterns" value="baseline and differential"/>
</dbReference>
<dbReference type="GO" id="GO:0005814">
    <property type="term" value="C:centriole"/>
    <property type="evidence" value="ECO:0000318"/>
    <property type="project" value="GO_Central"/>
</dbReference>
<dbReference type="GO" id="GO:0005813">
    <property type="term" value="C:centrosome"/>
    <property type="evidence" value="ECO:0000314"/>
    <property type="project" value="UniProtKB"/>
</dbReference>
<dbReference type="GO" id="GO:0005929">
    <property type="term" value="C:cilium"/>
    <property type="evidence" value="ECO:0000250"/>
    <property type="project" value="UniProtKB"/>
</dbReference>
<dbReference type="GO" id="GO:0005737">
    <property type="term" value="C:cytoplasm"/>
    <property type="evidence" value="ECO:0000314"/>
    <property type="project" value="MGI"/>
</dbReference>
<dbReference type="GO" id="GO:0005829">
    <property type="term" value="C:cytosol"/>
    <property type="evidence" value="ECO:0000314"/>
    <property type="project" value="HPA"/>
</dbReference>
<dbReference type="GO" id="GO:0097730">
    <property type="term" value="C:non-motile cilium"/>
    <property type="evidence" value="ECO:0000318"/>
    <property type="project" value="GO_Central"/>
</dbReference>
<dbReference type="GO" id="GO:0005634">
    <property type="term" value="C:nucleus"/>
    <property type="evidence" value="ECO:0000314"/>
    <property type="project" value="MGI"/>
</dbReference>
<dbReference type="GO" id="GO:0005886">
    <property type="term" value="C:plasma membrane"/>
    <property type="evidence" value="ECO:0000314"/>
    <property type="project" value="HPA"/>
</dbReference>
<dbReference type="GO" id="GO:0060271">
    <property type="term" value="P:cilium assembly"/>
    <property type="evidence" value="ECO:0000250"/>
    <property type="project" value="UniProtKB"/>
</dbReference>
<dbReference type="InterPro" id="IPR052319">
    <property type="entry name" value="Centriolar_ciliogenesis_assoc"/>
</dbReference>
<dbReference type="InterPro" id="IPR026227">
    <property type="entry name" value="HYLS1"/>
</dbReference>
<dbReference type="InterPro" id="IPR027918">
    <property type="entry name" value="HYLS1_C_dom"/>
</dbReference>
<dbReference type="PANTHER" id="PTHR34174:SF1">
    <property type="entry name" value="CENTRIOLAR AND CILIOGENESIS-ASSOCIATED PROTEIN HYLS1"/>
    <property type="match status" value="1"/>
</dbReference>
<dbReference type="PANTHER" id="PTHR34174">
    <property type="entry name" value="HYDROLETHALUS SYNDROME PROTEIN 1"/>
    <property type="match status" value="1"/>
</dbReference>
<dbReference type="Pfam" id="PF15311">
    <property type="entry name" value="HYLS1_C"/>
    <property type="match status" value="1"/>
</dbReference>
<dbReference type="PRINTS" id="PR02098">
    <property type="entry name" value="HYLETHALUSS1"/>
</dbReference>
<comment type="function">
    <text evidence="1 2">Plays a role in ciliogenesis.</text>
</comment>
<comment type="interaction">
    <interactant intactId="EBI-720016">
        <id>Q96M11</id>
    </interactant>
    <interactant intactId="EBI-618309">
        <id>Q08379</id>
        <label>GOLGA2</label>
    </interactant>
    <organismsDiffer>false</organismsDiffer>
    <experiments>3</experiments>
</comment>
<comment type="subcellular location">
    <subcellularLocation>
        <location evidence="6">Cytoplasm</location>
    </subcellularLocation>
    <subcellularLocation>
        <location evidence="1 2">Cell projection</location>
        <location evidence="1 2">Cilium</location>
    </subcellularLocation>
    <subcellularLocation>
        <location evidence="3">Cytoplasm</location>
        <location evidence="3">Cytoskeleton</location>
        <location evidence="3">Microtubule organizing center</location>
        <location evidence="3">Centrosome</location>
    </subcellularLocation>
    <subcellularLocation>
        <location evidence="1 2">Cytoplasm</location>
        <location evidence="1 2">Cytoskeleton</location>
        <location evidence="1 2">Microtubule organizing center</location>
        <location evidence="1 2">Centrosome</location>
        <location evidence="1 2">Centriole</location>
    </subcellularLocation>
</comment>
<comment type="disease" evidence="6">
    <disease id="DI-01760">
        <name>Hydrolethalus syndrome 1</name>
        <acronym>HLS1</acronym>
        <description>A lethal syndrome characterized by polydactyly, central nervous system malformation, and hydrocephalus. The polydactyly is postaxial in the hands and preaxial in the feet. A highly characteristic hallux duplex is seen in almost no other situation. In half of the cases, a large atrioventricular communis defect of the heart is found. The pregnancy is characterized by hydramnios, which is often massive, and by preterm delivery.</description>
        <dbReference type="MIM" id="236680"/>
    </disease>
    <text>The disease is caused by variants affecting the gene represented in this entry.</text>
</comment>
<comment type="disease">
    <text evidence="7">Defects in HYLS1 may be involved in ciliopathies other than hydrolethalus syndrome 1. A homozygous mutation resulting in a C-terminal extension of 11 residues has been found in patients diagnosed as Joubert syndrome, a ciliopathy presenting with cerebellar ataxia, oculomotor apraxia, hypotonia, neonatal breathing abnormalities and psychomotor delay. Neuroradiologically, it is characterized by cerebellar vermian hypoplasia/aplasia, thickened and reoriented superior cerebellar peduncles, and an abnormally large interpeduncular fossa, giving the appearance of a molar tooth on transaxial slices (molar tooth sign). Additional variable features include retinal dystrophy and renal disease.</text>
</comment>
<comment type="similarity">
    <text evidence="8">Belongs to the HYLS1 family.</text>
</comment>
<comment type="sequence caution" evidence="8">
    <conflict type="erroneous initiation">
        <sequence resource="EMBL-CDS" id="AAH15047"/>
    </conflict>
</comment>
<proteinExistence type="evidence at protein level"/>
<gene>
    <name evidence="9" type="primary">HYLS1</name>
    <name type="synonym">HLS</name>
</gene>
<feature type="chain" id="PRO_0000284925" description="Centriolar and ciliogenesis-associated protein HYLS1">
    <location>
        <begin position="1"/>
        <end position="299"/>
    </location>
</feature>
<feature type="modified residue" description="Phosphoserine" evidence="10">
    <location>
        <position position="179"/>
    </location>
</feature>
<feature type="sequence variant" id="VAR_031866" description="In dbSNP:rs667782." evidence="4 5">
    <original>C</original>
    <variation>R</variation>
    <location>
        <position position="31"/>
    </location>
</feature>
<feature type="sequence variant" id="VAR_031867" description="In HLS1; altered subcellular localization, becomes localized to nuclear structures; dbSNP:rs104894232." evidence="6">
    <original>D</original>
    <variation>G</variation>
    <location>
        <position position="211"/>
    </location>
</feature>
<keyword id="KW-0966">Cell projection</keyword>
<keyword id="KW-1186">Ciliopathy</keyword>
<keyword id="KW-0970">Cilium biogenesis/degradation</keyword>
<keyword id="KW-0963">Cytoplasm</keyword>
<keyword id="KW-0206">Cytoskeleton</keyword>
<keyword id="KW-0225">Disease variant</keyword>
<keyword id="KW-0597">Phosphoprotein</keyword>
<keyword id="KW-1267">Proteomics identification</keyword>
<keyword id="KW-1185">Reference proteome</keyword>
<accession>Q96M11</accession>
<accession>B3KXI8</accession>
<accession>Q96BX9</accession>
<sequence length="299" mass="34359">MEELLPDGQIWANMDPEERMLAAATAFTHICAGQGEGDVRREAQSIQYDPYSKASVAPGKRPALPVQLQYPHVESNVPSETVSEASQRLRKPVMKRKVLRRKPDGEVLVTDESIISESESGTENDQDLWDLRQRLMNVQFQEDKESSFDVSQKFNLPHEYQGISQDQLICSLQREGMGSPAYEQDLIVASRPKSFILPKLDQLSRNRGKTDRVARYFEYKRDWDSIRLPGEDHRKELRWGVREQMLCRAEPQSKPQHIYVPNNYLVPTEKKRSALRWGVRCDLANGVIPRKLPFPLSPS</sequence>
<reference key="1">
    <citation type="journal article" date="2004" name="Nat. Genet.">
        <title>Complete sequencing and characterization of 21,243 full-length human cDNAs.</title>
        <authorList>
            <person name="Ota T."/>
            <person name="Suzuki Y."/>
            <person name="Nishikawa T."/>
            <person name="Otsuki T."/>
            <person name="Sugiyama T."/>
            <person name="Irie R."/>
            <person name="Wakamatsu A."/>
            <person name="Hayashi K."/>
            <person name="Sato H."/>
            <person name="Nagai K."/>
            <person name="Kimura K."/>
            <person name="Makita H."/>
            <person name="Sekine M."/>
            <person name="Obayashi M."/>
            <person name="Nishi T."/>
            <person name="Shibahara T."/>
            <person name="Tanaka T."/>
            <person name="Ishii S."/>
            <person name="Yamamoto J."/>
            <person name="Saito K."/>
            <person name="Kawai Y."/>
            <person name="Isono Y."/>
            <person name="Nakamura Y."/>
            <person name="Nagahari K."/>
            <person name="Murakami K."/>
            <person name="Yasuda T."/>
            <person name="Iwayanagi T."/>
            <person name="Wagatsuma M."/>
            <person name="Shiratori A."/>
            <person name="Sudo H."/>
            <person name="Hosoiri T."/>
            <person name="Kaku Y."/>
            <person name="Kodaira H."/>
            <person name="Kondo H."/>
            <person name="Sugawara M."/>
            <person name="Takahashi M."/>
            <person name="Kanda K."/>
            <person name="Yokoi T."/>
            <person name="Furuya T."/>
            <person name="Kikkawa E."/>
            <person name="Omura Y."/>
            <person name="Abe K."/>
            <person name="Kamihara K."/>
            <person name="Katsuta N."/>
            <person name="Sato K."/>
            <person name="Tanikawa M."/>
            <person name="Yamazaki M."/>
            <person name="Ninomiya K."/>
            <person name="Ishibashi T."/>
            <person name="Yamashita H."/>
            <person name="Murakawa K."/>
            <person name="Fujimori K."/>
            <person name="Tanai H."/>
            <person name="Kimata M."/>
            <person name="Watanabe M."/>
            <person name="Hiraoka S."/>
            <person name="Chiba Y."/>
            <person name="Ishida S."/>
            <person name="Ono Y."/>
            <person name="Takiguchi S."/>
            <person name="Watanabe S."/>
            <person name="Yosida M."/>
            <person name="Hotuta T."/>
            <person name="Kusano J."/>
            <person name="Kanehori K."/>
            <person name="Takahashi-Fujii A."/>
            <person name="Hara H."/>
            <person name="Tanase T.-O."/>
            <person name="Nomura Y."/>
            <person name="Togiya S."/>
            <person name="Komai F."/>
            <person name="Hara R."/>
            <person name="Takeuchi K."/>
            <person name="Arita M."/>
            <person name="Imose N."/>
            <person name="Musashino K."/>
            <person name="Yuuki H."/>
            <person name="Oshima A."/>
            <person name="Sasaki N."/>
            <person name="Aotsuka S."/>
            <person name="Yoshikawa Y."/>
            <person name="Matsunawa H."/>
            <person name="Ichihara T."/>
            <person name="Shiohata N."/>
            <person name="Sano S."/>
            <person name="Moriya S."/>
            <person name="Momiyama H."/>
            <person name="Satoh N."/>
            <person name="Takami S."/>
            <person name="Terashima Y."/>
            <person name="Suzuki O."/>
            <person name="Nakagawa S."/>
            <person name="Senoh A."/>
            <person name="Mizoguchi H."/>
            <person name="Goto Y."/>
            <person name="Shimizu F."/>
            <person name="Wakebe H."/>
            <person name="Hishigaki H."/>
            <person name="Watanabe T."/>
            <person name="Sugiyama A."/>
            <person name="Takemoto M."/>
            <person name="Kawakami B."/>
            <person name="Yamazaki M."/>
            <person name="Watanabe K."/>
            <person name="Kumagai A."/>
            <person name="Itakura S."/>
            <person name="Fukuzumi Y."/>
            <person name="Fujimori Y."/>
            <person name="Komiyama M."/>
            <person name="Tashiro H."/>
            <person name="Tanigami A."/>
            <person name="Fujiwara T."/>
            <person name="Ono T."/>
            <person name="Yamada K."/>
            <person name="Fujii Y."/>
            <person name="Ozaki K."/>
            <person name="Hirao M."/>
            <person name="Ohmori Y."/>
            <person name="Kawabata A."/>
            <person name="Hikiji T."/>
            <person name="Kobatake N."/>
            <person name="Inagaki H."/>
            <person name="Ikema Y."/>
            <person name="Okamoto S."/>
            <person name="Okitani R."/>
            <person name="Kawakami T."/>
            <person name="Noguchi S."/>
            <person name="Itoh T."/>
            <person name="Shigeta K."/>
            <person name="Senba T."/>
            <person name="Matsumura K."/>
            <person name="Nakajima Y."/>
            <person name="Mizuno T."/>
            <person name="Morinaga M."/>
            <person name="Sasaki M."/>
            <person name="Togashi T."/>
            <person name="Oyama M."/>
            <person name="Hata H."/>
            <person name="Watanabe M."/>
            <person name="Komatsu T."/>
            <person name="Mizushima-Sugano J."/>
            <person name="Satoh T."/>
            <person name="Shirai Y."/>
            <person name="Takahashi Y."/>
            <person name="Nakagawa K."/>
            <person name="Okumura K."/>
            <person name="Nagase T."/>
            <person name="Nomura N."/>
            <person name="Kikuchi H."/>
            <person name="Masuho Y."/>
            <person name="Yamashita R."/>
            <person name="Nakai K."/>
            <person name="Yada T."/>
            <person name="Nakamura Y."/>
            <person name="Ohara O."/>
            <person name="Isogai T."/>
            <person name="Sugano S."/>
        </authorList>
    </citation>
    <scope>NUCLEOTIDE SEQUENCE [LARGE SCALE MRNA]</scope>
    <scope>VARIANT ARG-31</scope>
    <source>
        <tissue>Testis</tissue>
        <tissue>Thalamus</tissue>
    </source>
</reference>
<reference key="2">
    <citation type="journal article" date="2006" name="Nature">
        <title>Human chromosome 11 DNA sequence and analysis including novel gene identification.</title>
        <authorList>
            <person name="Taylor T.D."/>
            <person name="Noguchi H."/>
            <person name="Totoki Y."/>
            <person name="Toyoda A."/>
            <person name="Kuroki Y."/>
            <person name="Dewar K."/>
            <person name="Lloyd C."/>
            <person name="Itoh T."/>
            <person name="Takeda T."/>
            <person name="Kim D.-W."/>
            <person name="She X."/>
            <person name="Barlow K.F."/>
            <person name="Bloom T."/>
            <person name="Bruford E."/>
            <person name="Chang J.L."/>
            <person name="Cuomo C.A."/>
            <person name="Eichler E."/>
            <person name="FitzGerald M.G."/>
            <person name="Jaffe D.B."/>
            <person name="LaButti K."/>
            <person name="Nicol R."/>
            <person name="Park H.-S."/>
            <person name="Seaman C."/>
            <person name="Sougnez C."/>
            <person name="Yang X."/>
            <person name="Zimmer A.R."/>
            <person name="Zody M.C."/>
            <person name="Birren B.W."/>
            <person name="Nusbaum C."/>
            <person name="Fujiyama A."/>
            <person name="Hattori M."/>
            <person name="Rogers J."/>
            <person name="Lander E.S."/>
            <person name="Sakaki Y."/>
        </authorList>
    </citation>
    <scope>NUCLEOTIDE SEQUENCE [LARGE SCALE GENOMIC DNA]</scope>
</reference>
<reference key="3">
    <citation type="journal article" date="2004" name="Genome Res.">
        <title>The status, quality, and expansion of the NIH full-length cDNA project: the Mammalian Gene Collection (MGC).</title>
        <authorList>
            <consortium name="The MGC Project Team"/>
        </authorList>
    </citation>
    <scope>NUCLEOTIDE SEQUENCE [LARGE SCALE MRNA]</scope>
    <scope>VARIANT ARG-31</scope>
    <source>
        <tissue>Uterus</tissue>
    </source>
</reference>
<reference key="4">
    <citation type="journal article" date="2003" name="Nature">
        <title>Proteomic characterization of the human centrosome by protein correlation profiling.</title>
        <authorList>
            <person name="Andersen J.S."/>
            <person name="Wilkinson C.J."/>
            <person name="Mayor T."/>
            <person name="Mortensen P."/>
            <person name="Nigg E.A."/>
            <person name="Mann M."/>
        </authorList>
    </citation>
    <scope>IDENTIFICATION BY MASS SPECTROMETRY</scope>
    <scope>SUBCELLULAR LOCATION [LARGE SCALE ANALYSIS]</scope>
    <source>
        <tissue>Lymphoblast</tissue>
    </source>
</reference>
<reference key="5">
    <citation type="journal article" date="2013" name="J. Proteome Res.">
        <title>Toward a comprehensive characterization of a human cancer cell phosphoproteome.</title>
        <authorList>
            <person name="Zhou H."/>
            <person name="Di Palma S."/>
            <person name="Preisinger C."/>
            <person name="Peng M."/>
            <person name="Polat A.N."/>
            <person name="Heck A.J."/>
            <person name="Mohammed S."/>
        </authorList>
    </citation>
    <scope>PHOSPHORYLATION [LARGE SCALE ANALYSIS] AT SER-179</scope>
    <scope>IDENTIFICATION BY MASS SPECTROMETRY [LARGE SCALE ANALYSIS]</scope>
    <source>
        <tissue>Erythroleukemia</tissue>
    </source>
</reference>
<reference key="6">
    <citation type="journal article" date="2005" name="Hum. Mol. Genet.">
        <title>Hydrolethalus syndrome is caused by a missense mutation in a novel gene HYLS1.</title>
        <authorList>
            <person name="Mee L."/>
            <person name="Honkala H."/>
            <person name="Kopra O."/>
            <person name="Vesa J."/>
            <person name="Finnilae S."/>
            <person name="Visapaeae I."/>
            <person name="Sang T.-K."/>
            <person name="Jackson G.R."/>
            <person name="Salonen R."/>
            <person name="Kestilae M."/>
            <person name="Peltonen L."/>
        </authorList>
    </citation>
    <scope>VARIANT HLS1 GLY-211</scope>
    <scope>CHARACTERIZATION OF VARIANT HLS1 GLY-211</scope>
    <scope>SUBCELLULAR LOCATION</scope>
</reference>
<reference key="7">
    <citation type="journal article" date="2016" name="Clin. Genet.">
        <title>A novel HYLS1 homozygous mutation in living siblings with Joubert syndrome.</title>
        <authorList>
            <person name="Oka M."/>
            <person name="Shimojima K."/>
            <person name="Yamamoto T."/>
            <person name="Hanaoka Y."/>
            <person name="Sato S."/>
            <person name="Yasuhara T."/>
            <person name="Yoshinaga H."/>
            <person name="Kobayashi K."/>
        </authorList>
    </citation>
    <scope>POSSIBLE INVOLVEMENT IN JOUBERT SYNDROME</scope>
</reference>
<evidence type="ECO:0000250" key="1">
    <source>
        <dbReference type="UniProtKB" id="A0A1L8ER70"/>
    </source>
</evidence>
<evidence type="ECO:0000250" key="2">
    <source>
        <dbReference type="UniProtKB" id="Q95X94"/>
    </source>
</evidence>
<evidence type="ECO:0000269" key="3">
    <source>
    </source>
</evidence>
<evidence type="ECO:0000269" key="4">
    <source>
    </source>
</evidence>
<evidence type="ECO:0000269" key="5">
    <source>
    </source>
</evidence>
<evidence type="ECO:0000269" key="6">
    <source>
    </source>
</evidence>
<evidence type="ECO:0000269" key="7">
    <source>
    </source>
</evidence>
<evidence type="ECO:0000305" key="8"/>
<evidence type="ECO:0000312" key="9">
    <source>
        <dbReference type="HGNC" id="HGNC:26558"/>
    </source>
</evidence>
<evidence type="ECO:0007744" key="10">
    <source>
    </source>
</evidence>
<name>HYLS1_HUMAN</name>